<name>LGC50_CAEEL</name>
<reference key="1">
    <citation type="journal article" date="1998" name="Science">
        <title>Genome sequence of the nematode C. elegans: a platform for investigating biology.</title>
        <authorList>
            <consortium name="The C. elegans sequencing consortium"/>
        </authorList>
    </citation>
    <scope>NUCLEOTIDE SEQUENCE [LARGE SCALE GENOMIC DNA]</scope>
    <source>
        <strain>Bristol N2</strain>
    </source>
</reference>
<evidence type="ECO:0000250" key="1"/>
<evidence type="ECO:0000255" key="2"/>
<evidence type="ECO:0000305" key="3"/>
<proteinExistence type="inferred from homology"/>
<comment type="subcellular location">
    <subcellularLocation>
        <location evidence="3">Postsynaptic cell membrane</location>
        <topology evidence="3">Multi-pass membrane protein</topology>
    </subcellularLocation>
    <subcellularLocation>
        <location evidence="3">Cell membrane</location>
        <topology evidence="3">Multi-pass membrane protein</topology>
    </subcellularLocation>
</comment>
<comment type="similarity">
    <text evidence="3">Belongs to the ligand-gated ion channel (TC 1.A.9) family.</text>
</comment>
<feature type="signal peptide" evidence="2">
    <location>
        <begin position="1"/>
        <end position="19"/>
    </location>
</feature>
<feature type="chain" id="PRO_0000076981" description="Ligand-gated ion channel 50">
    <location>
        <begin position="20"/>
        <end position="491"/>
    </location>
</feature>
<feature type="transmembrane region" description="Helical" evidence="2">
    <location>
        <begin position="241"/>
        <end position="261"/>
    </location>
</feature>
<feature type="transmembrane region" description="Helical" evidence="2">
    <location>
        <begin position="265"/>
        <end position="287"/>
    </location>
</feature>
<feature type="transmembrane region" description="Helical" evidence="2">
    <location>
        <begin position="302"/>
        <end position="322"/>
    </location>
</feature>
<feature type="transmembrane region" description="Helical" evidence="2">
    <location>
        <begin position="465"/>
        <end position="485"/>
    </location>
</feature>
<feature type="glycosylation site" description="N-linked (GlcNAc...) asparagine" evidence="2">
    <location>
        <position position="55"/>
    </location>
</feature>
<feature type="glycosylation site" description="N-linked (GlcNAc...) asparagine" evidence="2">
    <location>
        <position position="101"/>
    </location>
</feature>
<feature type="glycosylation site" description="N-linked (GlcNAc...) asparagine" evidence="2">
    <location>
        <position position="418"/>
    </location>
</feature>
<feature type="disulfide bond" evidence="1">
    <location>
        <begin position="157"/>
        <end position="171"/>
    </location>
</feature>
<accession>P41849</accession>
<dbReference type="EMBL" id="FO081094">
    <property type="protein sequence ID" value="CCD69080.1"/>
    <property type="molecule type" value="Genomic_DNA"/>
</dbReference>
<dbReference type="PIR" id="T16909">
    <property type="entry name" value="T16909"/>
</dbReference>
<dbReference type="RefSeq" id="NP_498637.3">
    <property type="nucleotide sequence ID" value="NM_066236.4"/>
</dbReference>
<dbReference type="SMR" id="P41849"/>
<dbReference type="BioGRID" id="53293">
    <property type="interactions" value="2"/>
</dbReference>
<dbReference type="FunCoup" id="P41849">
    <property type="interactions" value="12"/>
</dbReference>
<dbReference type="STRING" id="6239.T20B12.9.1"/>
<dbReference type="GlyCosmos" id="P41849">
    <property type="glycosylation" value="3 sites, No reported glycans"/>
</dbReference>
<dbReference type="PaxDb" id="6239-T20B12.9"/>
<dbReference type="PeptideAtlas" id="P41849"/>
<dbReference type="EnsemblMetazoa" id="T20B12.9.1">
    <property type="protein sequence ID" value="T20B12.9.1"/>
    <property type="gene ID" value="WBGene00020605"/>
</dbReference>
<dbReference type="GeneID" id="188633"/>
<dbReference type="KEGG" id="cel:CELE_T20B12.9"/>
<dbReference type="AGR" id="WB:WBGene00020605"/>
<dbReference type="CTD" id="188633"/>
<dbReference type="WormBase" id="T20B12.9">
    <property type="protein sequence ID" value="CE46014"/>
    <property type="gene ID" value="WBGene00020605"/>
    <property type="gene designation" value="lgc-50"/>
</dbReference>
<dbReference type="eggNOG" id="KOG3644">
    <property type="taxonomic scope" value="Eukaryota"/>
</dbReference>
<dbReference type="HOGENOM" id="CLU_010920_1_3_1"/>
<dbReference type="InParanoid" id="P41849"/>
<dbReference type="OMA" id="YDTHLLP"/>
<dbReference type="OrthoDB" id="442503at2759"/>
<dbReference type="PhylomeDB" id="P41849"/>
<dbReference type="Reactome" id="R-CEL-112314">
    <property type="pathway name" value="Neurotransmitter receptors and postsynaptic signal transmission"/>
</dbReference>
<dbReference type="PRO" id="PR:P41849"/>
<dbReference type="Proteomes" id="UP000001940">
    <property type="component" value="Chromosome III"/>
</dbReference>
<dbReference type="Bgee" id="WBGene00020605">
    <property type="expression patterns" value="Expressed in larva and 3 other cell types or tissues"/>
</dbReference>
<dbReference type="GO" id="GO:0045211">
    <property type="term" value="C:postsynaptic membrane"/>
    <property type="evidence" value="ECO:0007669"/>
    <property type="project" value="UniProtKB-SubCell"/>
</dbReference>
<dbReference type="GO" id="GO:0005230">
    <property type="term" value="F:extracellular ligand-gated monoatomic ion channel activity"/>
    <property type="evidence" value="ECO:0007669"/>
    <property type="project" value="InterPro"/>
</dbReference>
<dbReference type="GO" id="GO:0004888">
    <property type="term" value="F:transmembrane signaling receptor activity"/>
    <property type="evidence" value="ECO:0007669"/>
    <property type="project" value="InterPro"/>
</dbReference>
<dbReference type="GO" id="GO:1902476">
    <property type="term" value="P:chloride transmembrane transport"/>
    <property type="evidence" value="ECO:0000318"/>
    <property type="project" value="GO_Central"/>
</dbReference>
<dbReference type="CDD" id="cd18990">
    <property type="entry name" value="LGIC_ECD_GABAAR"/>
    <property type="match status" value="1"/>
</dbReference>
<dbReference type="CDD" id="cd19049">
    <property type="entry name" value="LGIC_TM_anion"/>
    <property type="match status" value="1"/>
</dbReference>
<dbReference type="FunFam" id="2.70.170.10:FF:000035">
    <property type="entry name" value="Ligand-Gated ion Channel"/>
    <property type="match status" value="1"/>
</dbReference>
<dbReference type="Gene3D" id="2.70.170.10">
    <property type="entry name" value="Neurotransmitter-gated ion-channel ligand-binding domain"/>
    <property type="match status" value="1"/>
</dbReference>
<dbReference type="Gene3D" id="1.20.58.390">
    <property type="entry name" value="Neurotransmitter-gated ion-channel transmembrane domain"/>
    <property type="match status" value="1"/>
</dbReference>
<dbReference type="InterPro" id="IPR006028">
    <property type="entry name" value="GABAA/Glycine_rcpt"/>
</dbReference>
<dbReference type="InterPro" id="IPR006202">
    <property type="entry name" value="Neur_chan_lig-bd"/>
</dbReference>
<dbReference type="InterPro" id="IPR036734">
    <property type="entry name" value="Neur_chan_lig-bd_sf"/>
</dbReference>
<dbReference type="InterPro" id="IPR006201">
    <property type="entry name" value="Neur_channel"/>
</dbReference>
<dbReference type="InterPro" id="IPR036719">
    <property type="entry name" value="Neuro-gated_channel_TM_sf"/>
</dbReference>
<dbReference type="InterPro" id="IPR038050">
    <property type="entry name" value="Neuro_actylchol_rec"/>
</dbReference>
<dbReference type="InterPro" id="IPR006029">
    <property type="entry name" value="Neurotrans-gated_channel_TM"/>
</dbReference>
<dbReference type="InterPro" id="IPR018000">
    <property type="entry name" value="Neurotransmitter_ion_chnl_CS"/>
</dbReference>
<dbReference type="PANTHER" id="PTHR18945">
    <property type="entry name" value="NEUROTRANSMITTER GATED ION CHANNEL"/>
    <property type="match status" value="1"/>
</dbReference>
<dbReference type="Pfam" id="PF02931">
    <property type="entry name" value="Neur_chan_LBD"/>
    <property type="match status" value="1"/>
</dbReference>
<dbReference type="Pfam" id="PF02932">
    <property type="entry name" value="Neur_chan_memb"/>
    <property type="match status" value="1"/>
</dbReference>
<dbReference type="PRINTS" id="PR00253">
    <property type="entry name" value="GABAARECEPTR"/>
</dbReference>
<dbReference type="PRINTS" id="PR00252">
    <property type="entry name" value="NRIONCHANNEL"/>
</dbReference>
<dbReference type="SUPFAM" id="SSF90112">
    <property type="entry name" value="Neurotransmitter-gated ion-channel transmembrane pore"/>
    <property type="match status" value="1"/>
</dbReference>
<dbReference type="SUPFAM" id="SSF63712">
    <property type="entry name" value="Nicotinic receptor ligand binding domain-like"/>
    <property type="match status" value="1"/>
</dbReference>
<dbReference type="PROSITE" id="PS00236">
    <property type="entry name" value="NEUROTR_ION_CHANNEL"/>
    <property type="match status" value="1"/>
</dbReference>
<gene>
    <name type="primary">lgc-50</name>
    <name type="ORF">T20B12.9</name>
</gene>
<keyword id="KW-1003">Cell membrane</keyword>
<keyword id="KW-1015">Disulfide bond</keyword>
<keyword id="KW-0325">Glycoprotein</keyword>
<keyword id="KW-0407">Ion channel</keyword>
<keyword id="KW-0406">Ion transport</keyword>
<keyword id="KW-1071">Ligand-gated ion channel</keyword>
<keyword id="KW-0472">Membrane</keyword>
<keyword id="KW-0628">Postsynaptic cell membrane</keyword>
<keyword id="KW-0675">Receptor</keyword>
<keyword id="KW-1185">Reference proteome</keyword>
<keyword id="KW-0732">Signal</keyword>
<keyword id="KW-0770">Synapse</keyword>
<keyword id="KW-0812">Transmembrane</keyword>
<keyword id="KW-1133">Transmembrane helix</keyword>
<keyword id="KW-0813">Transport</keyword>
<organism>
    <name type="scientific">Caenorhabditis elegans</name>
    <dbReference type="NCBI Taxonomy" id="6239"/>
    <lineage>
        <taxon>Eukaryota</taxon>
        <taxon>Metazoa</taxon>
        <taxon>Ecdysozoa</taxon>
        <taxon>Nematoda</taxon>
        <taxon>Chromadorea</taxon>
        <taxon>Rhabditida</taxon>
        <taxon>Rhabditina</taxon>
        <taxon>Rhabditomorpha</taxon>
        <taxon>Rhabditoidea</taxon>
        <taxon>Rhabditidae</taxon>
        <taxon>Peloderinae</taxon>
        <taxon>Caenorhabditis</taxon>
    </lineage>
</organism>
<protein>
    <recommendedName>
        <fullName>Ligand-gated ion channel 50</fullName>
    </recommendedName>
</protein>
<sequence>MRFLLVLQLVFFYFSAATTNSPKKCSRNSINLGKLIDTLLTDYDTHLLPEAEGVNVTIELHVQGVSGISEITGDFSLDVMYSEIWQDPRLSFKHLNVCATNITLKSDFRKKIWTPDTCIINSKSSSIHSSPSENTFVILYENGLVWSNFRLNVKTPCSVNLKMFPFDSLSCEIVLESYSFNTDEVRLMWHDVPITMMEKVELPDFDLIGWSTDHQRLEYPNGIWDRAKVKFTFARRYGFYLFQSYFPTSLTVISSWVGFFFDVRSVSARITLGVSSLLALTFQFGNVLRHLPRVSYIKCLDVWMIFSVIFIFCTLVELAIVCQLNRWERERQIGSKVLGHWLNQIRKTRKKESKADEGGGGGVGGLLRKRIPVLAQLKAAATDSNSGAATAMTTAIQPPNTNLNSITNSDNSKLVANNFTSIEHETYAYEKKRGFSHCFQRFVYAICPPDRDWTITSVQVDRCSMIMFPLSFLIFNVVYWSIYFMKMDRPM</sequence>